<comment type="similarity">
    <text evidence="1">Belongs to the universal ribosomal protein uS2 family.</text>
</comment>
<protein>
    <recommendedName>
        <fullName evidence="1">Small ribosomal subunit protein uS2</fullName>
    </recommendedName>
    <alternativeName>
        <fullName evidence="2">30S ribosomal protein S2</fullName>
    </alternativeName>
</protein>
<proteinExistence type="inferred from homology"/>
<dbReference type="EMBL" id="CP000437">
    <property type="protein sequence ID" value="ABI82245.1"/>
    <property type="molecule type" value="Genomic_DNA"/>
</dbReference>
<dbReference type="RefSeq" id="WP_003014289.1">
    <property type="nucleotide sequence ID" value="NC_017463.1"/>
</dbReference>
<dbReference type="SMR" id="Q0BNT9"/>
<dbReference type="KEGG" id="fth:FTH_0219"/>
<dbReference type="GO" id="GO:0022627">
    <property type="term" value="C:cytosolic small ribosomal subunit"/>
    <property type="evidence" value="ECO:0007669"/>
    <property type="project" value="TreeGrafter"/>
</dbReference>
<dbReference type="GO" id="GO:0003735">
    <property type="term" value="F:structural constituent of ribosome"/>
    <property type="evidence" value="ECO:0007669"/>
    <property type="project" value="InterPro"/>
</dbReference>
<dbReference type="GO" id="GO:0006412">
    <property type="term" value="P:translation"/>
    <property type="evidence" value="ECO:0007669"/>
    <property type="project" value="UniProtKB-UniRule"/>
</dbReference>
<dbReference type="CDD" id="cd01425">
    <property type="entry name" value="RPS2"/>
    <property type="match status" value="1"/>
</dbReference>
<dbReference type="FunFam" id="1.10.287.610:FF:000001">
    <property type="entry name" value="30S ribosomal protein S2"/>
    <property type="match status" value="1"/>
</dbReference>
<dbReference type="Gene3D" id="3.40.50.10490">
    <property type="entry name" value="Glucose-6-phosphate isomerase like protein, domain 1"/>
    <property type="match status" value="1"/>
</dbReference>
<dbReference type="Gene3D" id="1.10.287.610">
    <property type="entry name" value="Helix hairpin bin"/>
    <property type="match status" value="1"/>
</dbReference>
<dbReference type="HAMAP" id="MF_00291_B">
    <property type="entry name" value="Ribosomal_uS2_B"/>
    <property type="match status" value="1"/>
</dbReference>
<dbReference type="InterPro" id="IPR001865">
    <property type="entry name" value="Ribosomal_uS2"/>
</dbReference>
<dbReference type="InterPro" id="IPR005706">
    <property type="entry name" value="Ribosomal_uS2_bac/mit/plastid"/>
</dbReference>
<dbReference type="InterPro" id="IPR018130">
    <property type="entry name" value="Ribosomal_uS2_CS"/>
</dbReference>
<dbReference type="InterPro" id="IPR023591">
    <property type="entry name" value="Ribosomal_uS2_flav_dom_sf"/>
</dbReference>
<dbReference type="NCBIfam" id="TIGR01011">
    <property type="entry name" value="rpsB_bact"/>
    <property type="match status" value="1"/>
</dbReference>
<dbReference type="PANTHER" id="PTHR12534">
    <property type="entry name" value="30S RIBOSOMAL PROTEIN S2 PROKARYOTIC AND ORGANELLAR"/>
    <property type="match status" value="1"/>
</dbReference>
<dbReference type="PANTHER" id="PTHR12534:SF0">
    <property type="entry name" value="SMALL RIBOSOMAL SUBUNIT PROTEIN US2M"/>
    <property type="match status" value="1"/>
</dbReference>
<dbReference type="Pfam" id="PF00318">
    <property type="entry name" value="Ribosomal_S2"/>
    <property type="match status" value="1"/>
</dbReference>
<dbReference type="PRINTS" id="PR00395">
    <property type="entry name" value="RIBOSOMALS2"/>
</dbReference>
<dbReference type="SUPFAM" id="SSF52313">
    <property type="entry name" value="Ribosomal protein S2"/>
    <property type="match status" value="1"/>
</dbReference>
<dbReference type="PROSITE" id="PS00962">
    <property type="entry name" value="RIBOSOMAL_S2_1"/>
    <property type="match status" value="1"/>
</dbReference>
<evidence type="ECO:0000255" key="1">
    <source>
        <dbReference type="HAMAP-Rule" id="MF_00291"/>
    </source>
</evidence>
<evidence type="ECO:0000305" key="2"/>
<organism>
    <name type="scientific">Francisella tularensis subsp. holarctica (strain OSU18)</name>
    <dbReference type="NCBI Taxonomy" id="393011"/>
    <lineage>
        <taxon>Bacteria</taxon>
        <taxon>Pseudomonadati</taxon>
        <taxon>Pseudomonadota</taxon>
        <taxon>Gammaproteobacteria</taxon>
        <taxon>Thiotrichales</taxon>
        <taxon>Francisellaceae</taxon>
        <taxon>Francisella</taxon>
    </lineage>
</organism>
<reference key="1">
    <citation type="journal article" date="2006" name="J. Bacteriol.">
        <title>Chromosome rearrangement and diversification of Francisella tularensis revealed by the type B (OSU18) genome sequence.</title>
        <authorList>
            <person name="Petrosino J.F."/>
            <person name="Xiang Q."/>
            <person name="Karpathy S.E."/>
            <person name="Jiang H."/>
            <person name="Yerrapragada S."/>
            <person name="Liu Y."/>
            <person name="Gioia J."/>
            <person name="Hemphill L."/>
            <person name="Gonzalez A."/>
            <person name="Raghavan T.M."/>
            <person name="Uzman A."/>
            <person name="Fox G.E."/>
            <person name="Highlander S."/>
            <person name="Reichard M."/>
            <person name="Morton R.J."/>
            <person name="Clinkenbeard K.D."/>
            <person name="Weinstock G.M."/>
        </authorList>
    </citation>
    <scope>NUCLEOTIDE SEQUENCE [LARGE SCALE GENOMIC DNA]</scope>
    <source>
        <strain>OSU18</strain>
    </source>
</reference>
<sequence length="239" mass="26422">MSLMKEMLSAGVHFGHKKAFWNPQMKEYIFGINHGVHIINLEKTVPLFQDAVNFVGKTVANGGKILFVGTKRQAQDIVEAEAKRCGMPFVSHRWLGGMLTNYKTVRQSIKRLAQLEKMREDGTLESLTKKEMLQNIRTIEKLEKVLGGIKEMGGLPDAIVVIDGNKEHIAIQEAQKLGIKVVAIVDTNSNPEGIDYIIPGNDDAVKSISFYMKKFADAVIDAQGLDRAVEAKADEAAQA</sequence>
<name>RS2_FRATO</name>
<feature type="chain" id="PRO_1000003964" description="Small ribosomal subunit protein uS2">
    <location>
        <begin position="1"/>
        <end position="239"/>
    </location>
</feature>
<accession>Q0BNT9</accession>
<gene>
    <name evidence="1" type="primary">rpsB</name>
    <name type="ordered locus">FTH_0219</name>
</gene>
<keyword id="KW-0687">Ribonucleoprotein</keyword>
<keyword id="KW-0689">Ribosomal protein</keyword>